<accession>B3GNI6</accession>
<accession>B3DMA8</accession>
<accession>B3GNI4</accession>
<comment type="function">
    <text evidence="7 10">Filament-forming cytoskeletal GTPase. May play a role in cytokinesis (Potential). May play a role in the cytoarchitecture of neurons, including dendritic arborization and dendritic spines, and in GABAergic synaptic connectivity.</text>
</comment>
<comment type="subunit">
    <text evidence="2 6">Septins polymerize into heterooligomeric protein complexes that form filaments, and can associate with cellular membranes, actin filaments and microtubules (By similarity). Forms homooligomers (By similarity). GTPase activity is required for filament formation (By similarity). Interacts with SEPTIN7 (PubMed:15485874). Interacts with SEPTIN9 and SEPTIN12 (By similarity).</text>
</comment>
<comment type="subcellular location">
    <subcellularLocation>
        <location>Cytoplasm</location>
        <location>Cytoskeleton</location>
    </subcellularLocation>
    <subcellularLocation>
        <location>Synapse</location>
    </subcellularLocation>
    <subcellularLocation>
        <location>Cell projection</location>
        <location>Dendritic spine</location>
    </subcellularLocation>
    <subcellularLocation>
        <location>Cell projection</location>
        <location>Axon</location>
    </subcellularLocation>
    <text>Partly colocalizes with stress fibers. Association with microtubules not observed in embryonic fibroblasts. In cultured hippocampal neurons, localizes to 54% of GABAergic and 25% of glutamatergic synapses. Frequently present at the base of dendritic protrusions and at the bifurcation points of the dendritic branches. Expressed at low levels in the axons of mature cultured hippocampal neurons. In embryonic fibroblasts, associated with actin stress fibers.</text>
</comment>
<comment type="alternative products">
    <event type="alternative splicing"/>
    <isoform>
        <id>B3GNI6-1</id>
        <name>1</name>
        <name>III</name>
        <sequence type="displayed"/>
    </isoform>
    <isoform>
        <id>B3GNI6-2</id>
        <name>2</name>
        <name>I</name>
        <name>II</name>
        <sequence type="described" ref="VSP_038168"/>
    </isoform>
    <isoform>
        <id>B3GNI6-3</id>
        <name>3</name>
        <name>IV</name>
        <sequence type="described" ref="VSP_038169"/>
    </isoform>
</comment>
<comment type="tissue specificity">
    <text evidence="7">Highly expressed in cerebellum, olfactory bulb, hippocampus, cerebral cortex, thalamus, and corpus striatum. In the hippocampus, strong expression around the pyramidal cells of the stratum pyramidale and in the stratum lucidum of the CA2-CA3 regions. In the olfactory bulb, particularly strong expression in the external plexiform layer. In the cerebellum, concentrates in the molecular layer, particularly in Purkinje cells, where it is found at the base of dendritic spines/protrusions, at the dendritic branching points and in some GABAergic synapses.</text>
</comment>
<comment type="developmental stage">
    <text evidence="7">Expressed in the embryo and in early postnatal weeks. On and before P14, distributes in a homogeneous way, throughout the brain. By P21, high expression observed in the molecular layer of the cerebellum and in the olfactory bulb. The maximum expression and the adult pattern of distribution in the brain occurs by P30. By P30, P45 and P90, highest expression occurs in the molecular layer of the cerebellum and in the olfactory bulb, and relatively high expression in the hippocampus, cerebral cortex, thalamus and corpus striatum.</text>
</comment>
<comment type="similarity">
    <text evidence="4">Belongs to the TRAFAC class TrmE-Era-EngA-EngB-Septin-like GTPase superfamily. Septin GTPase family.</text>
</comment>
<reference key="1">
    <citation type="journal article" date="2009" name="J. Biol. Chem.">
        <title>Septin 11 is present in GABAergic synapses and plays a functional role in the cytoarchitecture of neurons and GABAergic synaptic connectivity.</title>
        <authorList>
            <person name="Li X."/>
            <person name="Serwanski D.R."/>
            <person name="Miralles C.P."/>
            <person name="Nagata K."/>
            <person name="De Blas A.L."/>
        </authorList>
    </citation>
    <scope>NUCLEOTIDE SEQUENCE [MRNA] (ISOFORMS 1; 2 AND 3)</scope>
    <scope>FUNCTION</scope>
    <scope>TISSUE SPECIFICITY</scope>
    <scope>DEVELOPMENTAL STAGE</scope>
    <source>
        <strain>Sprague-Dawley</strain>
        <tissue>Brain</tissue>
    </source>
</reference>
<reference key="2">
    <citation type="submission" date="2005-09" db="EMBL/GenBank/DDBJ databases">
        <authorList>
            <person name="Mural R.J."/>
            <person name="Adams M.D."/>
            <person name="Myers E.W."/>
            <person name="Smith H.O."/>
            <person name="Venter J.C."/>
        </authorList>
    </citation>
    <scope>NUCLEOTIDE SEQUENCE [LARGE SCALE GENOMIC DNA]</scope>
</reference>
<reference key="3">
    <citation type="journal article" date="2004" name="Genome Res.">
        <title>The status, quality, and expansion of the NIH full-length cDNA project: the Mammalian Gene Collection (MGC).</title>
        <authorList>
            <consortium name="The MGC Project Team"/>
        </authorList>
    </citation>
    <scope>NUCLEOTIDE SEQUENCE [LARGE SCALE MRNA]</scope>
    <source>
        <tissue>Testis</tissue>
    </source>
</reference>
<reference key="4">
    <citation type="submission" date="2009-06" db="UniProtKB">
        <authorList>
            <person name="Bienvenut W.V."/>
            <person name="von Kriegsheim A."/>
            <person name="Kolch W."/>
        </authorList>
    </citation>
    <scope>PROTEIN SEQUENCE OF 2-14 AND 176-184</scope>
    <scope>CLEAVAGE OF INITIATOR METHIONINE</scope>
    <scope>ACETYLATION AT ALA-2</scope>
    <scope>IDENTIFICATION BY MASS SPECTROMETRY</scope>
    <source>
        <tissue>Fibroblast</tissue>
    </source>
</reference>
<reference key="5">
    <citation type="journal article" date="2004" name="FEBS Lett.">
        <title>Biochemical and cell biological characterization of a mammalian septin, Sept11.</title>
        <authorList>
            <person name="Hanai N."/>
            <person name="Nagata K."/>
            <person name="Kawajiri A."/>
            <person name="Shiromizu T."/>
            <person name="Saitoh N."/>
            <person name="Hasegawa Y."/>
            <person name="Murakami S."/>
            <person name="Inagaki M."/>
        </authorList>
    </citation>
    <scope>SUBCELLULAR LOCATION</scope>
    <scope>ASSOCIATION WITH STRESS FIBERS</scope>
</reference>
<reference key="6">
    <citation type="journal article" date="2004" name="J. Biol. Chem.">
        <title>Biochemical and cell biological analyses of a mammalian septin complex, Sept7/9b/11.</title>
        <authorList>
            <person name="Nagata K."/>
            <person name="Asano T."/>
            <person name="Nozawa Y."/>
            <person name="Inagaki M."/>
        </authorList>
    </citation>
    <scope>INTERACTION WITH SEPTIN7</scope>
    <scope>SUBCELLULAR LOCATION</scope>
</reference>
<gene>
    <name evidence="2" type="primary">Septin11</name>
    <name evidence="11" type="synonym">Sept11</name>
</gene>
<sequence length="431" mass="49695">MAVAVGRPSNEELRNLSLSGHVGFDSLPDQLVNKSTSQGFCFNILCVGETGIGKSTLMDTLFNTKFESDPATHNEPGVRLKARSYELQESNVRLKLTIVDTVGFGDQINKDDSYKPIVEYIDAQFEAYLQEELKIKRSLFNYHDTRIHACLYFIAPTGHSLKSLDLVTMKKLDSKVNIIPIIAKADTIAKNELHKFKSKIMSELVSNGVQIYQFPTDEETVAEINATMSVHLPFAVVGSTEEVKIGNKMAKARQYPWGVVQVENENHCDFVKLREMLIRVNMEDLREQTHTRHYELYRRCKLEEMGFKDTDPDSKPFSLQETYEAKRNEFLGELQKKEEEMRQMFVMRVKEKEAELKEAEKELHEKFDLLKRTHQEEKKKVEDKKKELEEEVSNFQKKKAAAQLLQSQAQQSGAQQTKKDKDKKNPWLCTE</sequence>
<organism>
    <name type="scientific">Rattus norvegicus</name>
    <name type="common">Rat</name>
    <dbReference type="NCBI Taxonomy" id="10116"/>
    <lineage>
        <taxon>Eukaryota</taxon>
        <taxon>Metazoa</taxon>
        <taxon>Chordata</taxon>
        <taxon>Craniata</taxon>
        <taxon>Vertebrata</taxon>
        <taxon>Euteleostomi</taxon>
        <taxon>Mammalia</taxon>
        <taxon>Eutheria</taxon>
        <taxon>Euarchontoglires</taxon>
        <taxon>Glires</taxon>
        <taxon>Rodentia</taxon>
        <taxon>Myomorpha</taxon>
        <taxon>Muroidea</taxon>
        <taxon>Muridae</taxon>
        <taxon>Murinae</taxon>
        <taxon>Rattus</taxon>
    </lineage>
</organism>
<feature type="initiator methionine" description="Removed" evidence="8">
    <location>
        <position position="1"/>
    </location>
</feature>
<feature type="chain" id="PRO_0000385476" description="Septin-11">
    <location>
        <begin position="2"/>
        <end position="431"/>
    </location>
</feature>
<feature type="domain" description="Septin-type G" evidence="4">
    <location>
        <begin position="38"/>
        <end position="304"/>
    </location>
</feature>
<feature type="region of interest" description="G1 motif" evidence="4">
    <location>
        <begin position="48"/>
        <end position="55"/>
    </location>
</feature>
<feature type="region of interest" description="G3 motif" evidence="4">
    <location>
        <begin position="100"/>
        <end position="103"/>
    </location>
</feature>
<feature type="region of interest" description="G4 motif" evidence="4">
    <location>
        <begin position="183"/>
        <end position="186"/>
    </location>
</feature>
<feature type="region of interest" description="Disordered" evidence="5">
    <location>
        <begin position="400"/>
        <end position="431"/>
    </location>
</feature>
<feature type="coiled-coil region" evidence="3">
    <location>
        <begin position="320"/>
        <end position="408"/>
    </location>
</feature>
<feature type="compositionally biased region" description="Low complexity" evidence="5">
    <location>
        <begin position="401"/>
        <end position="416"/>
    </location>
</feature>
<feature type="binding site" evidence="1">
    <location>
        <begin position="48"/>
        <end position="55"/>
    </location>
    <ligand>
        <name>GTP</name>
        <dbReference type="ChEBI" id="CHEBI:37565"/>
    </ligand>
</feature>
<feature type="binding site" evidence="1">
    <location>
        <position position="103"/>
    </location>
    <ligand>
        <name>GTP</name>
        <dbReference type="ChEBI" id="CHEBI:37565"/>
    </ligand>
</feature>
<feature type="binding site" evidence="1">
    <location>
        <begin position="184"/>
        <end position="192"/>
    </location>
    <ligand>
        <name>GTP</name>
        <dbReference type="ChEBI" id="CHEBI:37565"/>
    </ligand>
</feature>
<feature type="binding site" evidence="1">
    <location>
        <position position="238"/>
    </location>
    <ligand>
        <name>GTP</name>
        <dbReference type="ChEBI" id="CHEBI:37565"/>
    </ligand>
</feature>
<feature type="binding site" evidence="1">
    <location>
        <position position="253"/>
    </location>
    <ligand>
        <name>GTP</name>
        <dbReference type="ChEBI" id="CHEBI:37565"/>
    </ligand>
</feature>
<feature type="modified residue" description="N-acetylalanine" evidence="8">
    <location>
        <position position="2"/>
    </location>
</feature>
<feature type="modified residue" description="Phosphoserine" evidence="2">
    <location>
        <position position="9"/>
    </location>
</feature>
<feature type="splice variant" id="VSP_038168" description="In isoform 2." evidence="9">
    <original>N</original>
    <variation>NS</variation>
    <location>
        <position position="425"/>
    </location>
</feature>
<feature type="splice variant" id="VSP_038169" description="In isoform 3." evidence="9">
    <location>
        <begin position="426"/>
        <end position="431"/>
    </location>
</feature>
<dbReference type="EMBL" id="EU711414">
    <property type="protein sequence ID" value="ACE00321.1"/>
    <property type="molecule type" value="mRNA"/>
</dbReference>
<dbReference type="EMBL" id="EU711415">
    <property type="protein sequence ID" value="ACE00322.1"/>
    <property type="molecule type" value="mRNA"/>
</dbReference>
<dbReference type="EMBL" id="EU711416">
    <property type="protein sequence ID" value="ACE00323.1"/>
    <property type="molecule type" value="mRNA"/>
</dbReference>
<dbReference type="EMBL" id="EU711417">
    <property type="protein sequence ID" value="ACE00324.1"/>
    <property type="molecule type" value="mRNA"/>
</dbReference>
<dbReference type="EMBL" id="CH474060">
    <property type="protein sequence ID" value="EDL88655.1"/>
    <property type="molecule type" value="Genomic_DNA"/>
</dbReference>
<dbReference type="EMBL" id="BC167769">
    <property type="protein sequence ID" value="AAI67769.1"/>
    <property type="molecule type" value="mRNA"/>
</dbReference>
<dbReference type="RefSeq" id="NP_001100678.1">
    <molecule id="B3GNI6-2"/>
    <property type="nucleotide sequence ID" value="NM_001107208.3"/>
</dbReference>
<dbReference type="RefSeq" id="XP_038947770.1">
    <molecule id="B3GNI6-2"/>
    <property type="nucleotide sequence ID" value="XM_039091842.2"/>
</dbReference>
<dbReference type="RefSeq" id="XP_038947771.1">
    <molecule id="B3GNI6-2"/>
    <property type="nucleotide sequence ID" value="XM_039091843.2"/>
</dbReference>
<dbReference type="RefSeq" id="XP_038947772.1">
    <molecule id="B3GNI6-1"/>
    <property type="nucleotide sequence ID" value="XM_039091844.2"/>
</dbReference>
<dbReference type="RefSeq" id="XP_038947773.1">
    <molecule id="B3GNI6-1"/>
    <property type="nucleotide sequence ID" value="XM_039091845.2"/>
</dbReference>
<dbReference type="RefSeq" id="XP_038947774.1">
    <molecule id="B3GNI6-1"/>
    <property type="nucleotide sequence ID" value="XM_039091846.2"/>
</dbReference>
<dbReference type="RefSeq" id="XP_038947778.1">
    <molecule id="B3GNI6-3"/>
    <property type="nucleotide sequence ID" value="XM_039091850.2"/>
</dbReference>
<dbReference type="SMR" id="B3GNI6"/>
<dbReference type="BioGRID" id="258101">
    <property type="interactions" value="3"/>
</dbReference>
<dbReference type="CORUM" id="B3GNI6"/>
<dbReference type="FunCoup" id="B3GNI6">
    <property type="interactions" value="3246"/>
</dbReference>
<dbReference type="IntAct" id="B3GNI6">
    <property type="interactions" value="2"/>
</dbReference>
<dbReference type="MINT" id="B3GNI6"/>
<dbReference type="STRING" id="10116.ENSRNOP00000062626"/>
<dbReference type="GlyGen" id="B3GNI6">
    <property type="glycosylation" value="1 site, 1 O-linked glycan (1 site)"/>
</dbReference>
<dbReference type="iPTMnet" id="B3GNI6"/>
<dbReference type="PhosphoSitePlus" id="B3GNI6"/>
<dbReference type="jPOST" id="B3GNI6"/>
<dbReference type="PaxDb" id="10116-ENSRNOP00000062626"/>
<dbReference type="PeptideAtlas" id="B3GNI6"/>
<dbReference type="Ensembl" id="ENSRNOT00000100885.1">
    <molecule id="B3GNI6-2"/>
    <property type="protein sequence ID" value="ENSRNOP00000090314.1"/>
    <property type="gene ID" value="ENSRNOG00000002182.8"/>
</dbReference>
<dbReference type="GeneID" id="305227"/>
<dbReference type="KEGG" id="rno:305227"/>
<dbReference type="UCSC" id="RGD:1307405">
    <molecule id="B3GNI6-1"/>
    <property type="organism name" value="rat"/>
</dbReference>
<dbReference type="AGR" id="RGD:1307405"/>
<dbReference type="CTD" id="55752"/>
<dbReference type="RGD" id="1307405">
    <property type="gene designation" value="Septin11"/>
</dbReference>
<dbReference type="VEuPathDB" id="HostDB:ENSRNOG00000002182"/>
<dbReference type="eggNOG" id="KOG3859">
    <property type="taxonomic scope" value="Eukaryota"/>
</dbReference>
<dbReference type="GeneTree" id="ENSGT00940000160196"/>
<dbReference type="InParanoid" id="B3GNI6"/>
<dbReference type="OMA" id="RNRTIMA"/>
<dbReference type="OrthoDB" id="71551at9989"/>
<dbReference type="PhylomeDB" id="B3GNI6"/>
<dbReference type="TreeFam" id="TF101080"/>
<dbReference type="PRO" id="PR:B3GNI6"/>
<dbReference type="Proteomes" id="UP000002494">
    <property type="component" value="Chromosome 14"/>
</dbReference>
<dbReference type="Proteomes" id="UP000234681">
    <property type="component" value="Chromosome 14"/>
</dbReference>
<dbReference type="Bgee" id="ENSRNOG00000002182">
    <property type="expression patterns" value="Expressed in frontal cortex and 19 other cell types or tissues"/>
</dbReference>
<dbReference type="ExpressionAtlas" id="B3GNI6">
    <property type="expression patterns" value="baseline and differential"/>
</dbReference>
<dbReference type="GO" id="GO:0030424">
    <property type="term" value="C:axon"/>
    <property type="evidence" value="ECO:0007669"/>
    <property type="project" value="UniProtKB-SubCell"/>
</dbReference>
<dbReference type="GO" id="GO:0032153">
    <property type="term" value="C:cell division site"/>
    <property type="evidence" value="ECO:0000318"/>
    <property type="project" value="GO_Central"/>
</dbReference>
<dbReference type="GO" id="GO:0043197">
    <property type="term" value="C:dendritic spine"/>
    <property type="evidence" value="ECO:0007669"/>
    <property type="project" value="UniProtKB-SubCell"/>
</dbReference>
<dbReference type="GO" id="GO:0098982">
    <property type="term" value="C:GABA-ergic synapse"/>
    <property type="evidence" value="ECO:0000314"/>
    <property type="project" value="SynGO"/>
</dbReference>
<dbReference type="GO" id="GO:0098978">
    <property type="term" value="C:glutamatergic synapse"/>
    <property type="evidence" value="ECO:0000314"/>
    <property type="project" value="SynGO"/>
</dbReference>
<dbReference type="GO" id="GO:0015630">
    <property type="term" value="C:microtubule cytoskeleton"/>
    <property type="evidence" value="ECO:0000318"/>
    <property type="project" value="GO_Central"/>
</dbReference>
<dbReference type="GO" id="GO:0098794">
    <property type="term" value="C:postsynapse"/>
    <property type="evidence" value="ECO:0000314"/>
    <property type="project" value="SynGO"/>
</dbReference>
<dbReference type="GO" id="GO:0099629">
    <property type="term" value="C:postsynaptic specialization of symmetric synapse"/>
    <property type="evidence" value="ECO:0000314"/>
    <property type="project" value="SynGO"/>
</dbReference>
<dbReference type="GO" id="GO:0031105">
    <property type="term" value="C:septin complex"/>
    <property type="evidence" value="ECO:0000250"/>
    <property type="project" value="UniProtKB"/>
</dbReference>
<dbReference type="GO" id="GO:0005940">
    <property type="term" value="C:septin ring"/>
    <property type="evidence" value="ECO:0000318"/>
    <property type="project" value="GO_Central"/>
</dbReference>
<dbReference type="GO" id="GO:0001725">
    <property type="term" value="C:stress fiber"/>
    <property type="evidence" value="ECO:0000266"/>
    <property type="project" value="RGD"/>
</dbReference>
<dbReference type="GO" id="GO:0005525">
    <property type="term" value="F:GTP binding"/>
    <property type="evidence" value="ECO:0007669"/>
    <property type="project" value="UniProtKB-KW"/>
</dbReference>
<dbReference type="GO" id="GO:0003924">
    <property type="term" value="F:GTPase activity"/>
    <property type="evidence" value="ECO:0000318"/>
    <property type="project" value="GO_Central"/>
</dbReference>
<dbReference type="GO" id="GO:0060090">
    <property type="term" value="F:molecular adaptor activity"/>
    <property type="evidence" value="ECO:0000318"/>
    <property type="project" value="GO_Central"/>
</dbReference>
<dbReference type="GO" id="GO:0061640">
    <property type="term" value="P:cytoskeleton-dependent cytokinesis"/>
    <property type="evidence" value="ECO:0000318"/>
    <property type="project" value="GO_Central"/>
</dbReference>
<dbReference type="GO" id="GO:0008104">
    <property type="term" value="P:protein localization"/>
    <property type="evidence" value="ECO:0000318"/>
    <property type="project" value="GO_Central"/>
</dbReference>
<dbReference type="GO" id="GO:0050807">
    <property type="term" value="P:regulation of synapse organization"/>
    <property type="evidence" value="ECO:0000314"/>
    <property type="project" value="SynGO"/>
</dbReference>
<dbReference type="CDD" id="cd01850">
    <property type="entry name" value="CDC_Septin"/>
    <property type="match status" value="1"/>
</dbReference>
<dbReference type="FunFam" id="3.40.50.300:FF:000036">
    <property type="entry name" value="septin-6 isoform X2"/>
    <property type="match status" value="1"/>
</dbReference>
<dbReference type="Gene3D" id="3.40.50.300">
    <property type="entry name" value="P-loop containing nucleotide triphosphate hydrolases"/>
    <property type="match status" value="1"/>
</dbReference>
<dbReference type="InterPro" id="IPR030379">
    <property type="entry name" value="G_SEPTIN_dom"/>
</dbReference>
<dbReference type="InterPro" id="IPR027417">
    <property type="entry name" value="P-loop_NTPase"/>
</dbReference>
<dbReference type="InterPro" id="IPR016491">
    <property type="entry name" value="Septin"/>
</dbReference>
<dbReference type="PANTHER" id="PTHR18884">
    <property type="entry name" value="SEPTIN"/>
    <property type="match status" value="1"/>
</dbReference>
<dbReference type="Pfam" id="PF00735">
    <property type="entry name" value="Septin"/>
    <property type="match status" value="1"/>
</dbReference>
<dbReference type="PIRSF" id="PIRSF006698">
    <property type="entry name" value="Septin"/>
    <property type="match status" value="1"/>
</dbReference>
<dbReference type="SUPFAM" id="SSF52540">
    <property type="entry name" value="P-loop containing nucleoside triphosphate hydrolases"/>
    <property type="match status" value="1"/>
</dbReference>
<dbReference type="PROSITE" id="PS51719">
    <property type="entry name" value="G_SEPTIN"/>
    <property type="match status" value="1"/>
</dbReference>
<keyword id="KW-0007">Acetylation</keyword>
<keyword id="KW-0025">Alternative splicing</keyword>
<keyword id="KW-0131">Cell cycle</keyword>
<keyword id="KW-0132">Cell division</keyword>
<keyword id="KW-0966">Cell projection</keyword>
<keyword id="KW-0175">Coiled coil</keyword>
<keyword id="KW-0963">Cytoplasm</keyword>
<keyword id="KW-0206">Cytoskeleton</keyword>
<keyword id="KW-0903">Direct protein sequencing</keyword>
<keyword id="KW-0342">GTP-binding</keyword>
<keyword id="KW-0547">Nucleotide-binding</keyword>
<keyword id="KW-0597">Phosphoprotein</keyword>
<keyword id="KW-1185">Reference proteome</keyword>
<keyword id="KW-0770">Synapse</keyword>
<evidence type="ECO:0000250" key="1"/>
<evidence type="ECO:0000250" key="2">
    <source>
        <dbReference type="UniProtKB" id="Q9NVA2"/>
    </source>
</evidence>
<evidence type="ECO:0000255" key="3"/>
<evidence type="ECO:0000255" key="4">
    <source>
        <dbReference type="PROSITE-ProRule" id="PRU01056"/>
    </source>
</evidence>
<evidence type="ECO:0000256" key="5">
    <source>
        <dbReference type="SAM" id="MobiDB-lite"/>
    </source>
</evidence>
<evidence type="ECO:0000269" key="6">
    <source>
    </source>
</evidence>
<evidence type="ECO:0000269" key="7">
    <source>
    </source>
</evidence>
<evidence type="ECO:0000269" key="8">
    <source ref="4"/>
</evidence>
<evidence type="ECO:0000303" key="9">
    <source>
    </source>
</evidence>
<evidence type="ECO:0000305" key="10"/>
<evidence type="ECO:0000312" key="11">
    <source>
        <dbReference type="RGD" id="1307405"/>
    </source>
</evidence>
<protein>
    <recommendedName>
        <fullName>Septin-11</fullName>
    </recommendedName>
</protein>
<proteinExistence type="evidence at protein level"/>
<name>SEP11_RAT</name>